<comment type="function">
    <text evidence="1 2">E3 ubiquitin-protein ligase. Also acts as a negative regulator of hedgehog signaling.</text>
</comment>
<comment type="catalytic activity">
    <reaction>
        <text>S-ubiquitinyl-[E2 ubiquitin-conjugating enzyme]-L-cysteine + [acceptor protein]-L-lysine = [E2 ubiquitin-conjugating enzyme]-L-cysteine + N(6)-ubiquitinyl-[acceptor protein]-L-lysine.</text>
        <dbReference type="EC" id="2.3.2.27"/>
    </reaction>
</comment>
<comment type="pathway">
    <text>Protein modification; protein ubiquitination.</text>
</comment>
<comment type="domain">
    <text evidence="1">The RING finger is required for ubiquitin ligase activity.</text>
</comment>
<comment type="PTM">
    <text evidence="1">Autoubiquitinated in vitro.</text>
</comment>
<gene>
    <name type="primary">mgrn1</name>
</gene>
<name>MGRN1_DANRE</name>
<keyword id="KW-0479">Metal-binding</keyword>
<keyword id="KW-1185">Reference proteome</keyword>
<keyword id="KW-0808">Transferase</keyword>
<keyword id="KW-0832">Ubl conjugation</keyword>
<keyword id="KW-0833">Ubl conjugation pathway</keyword>
<keyword id="KW-0862">Zinc</keyword>
<keyword id="KW-0863">Zinc-finger</keyword>
<dbReference type="EC" id="2.3.2.27"/>
<dbReference type="EMBL" id="BC048069">
    <property type="protein sequence ID" value="AAH48069.1"/>
    <property type="molecule type" value="mRNA"/>
</dbReference>
<dbReference type="FunCoup" id="Q7ZUL9">
    <property type="interactions" value="481"/>
</dbReference>
<dbReference type="STRING" id="7955.ENSDARP00000132672"/>
<dbReference type="PaxDb" id="7955-ENSDARP00000068493"/>
<dbReference type="AGR" id="ZFIN:ZDB-GENE-030131-6192"/>
<dbReference type="ZFIN" id="ZDB-GENE-030131-6192">
    <property type="gene designation" value="mgrn1a"/>
</dbReference>
<dbReference type="eggNOG" id="KOG4265">
    <property type="taxonomic scope" value="Eukaryota"/>
</dbReference>
<dbReference type="InParanoid" id="Q7ZUL9"/>
<dbReference type="PhylomeDB" id="Q7ZUL9"/>
<dbReference type="TreeFam" id="TF314969"/>
<dbReference type="UniPathway" id="UPA00143"/>
<dbReference type="PRO" id="PR:Q7ZUL9"/>
<dbReference type="Proteomes" id="UP000000437">
    <property type="component" value="Unplaced"/>
</dbReference>
<dbReference type="GO" id="GO:0005737">
    <property type="term" value="C:cytoplasm"/>
    <property type="evidence" value="ECO:0000318"/>
    <property type="project" value="GO_Central"/>
</dbReference>
<dbReference type="GO" id="GO:0005769">
    <property type="term" value="C:early endosome"/>
    <property type="evidence" value="ECO:0000318"/>
    <property type="project" value="GO_Central"/>
</dbReference>
<dbReference type="GO" id="GO:0005634">
    <property type="term" value="C:nucleus"/>
    <property type="evidence" value="ECO:0000318"/>
    <property type="project" value="GO_Central"/>
</dbReference>
<dbReference type="GO" id="GO:0061630">
    <property type="term" value="F:ubiquitin protein ligase activity"/>
    <property type="evidence" value="ECO:0000318"/>
    <property type="project" value="GO_Central"/>
</dbReference>
<dbReference type="GO" id="GO:0008270">
    <property type="term" value="F:zinc ion binding"/>
    <property type="evidence" value="ECO:0007669"/>
    <property type="project" value="UniProtKB-KW"/>
</dbReference>
<dbReference type="GO" id="GO:0008333">
    <property type="term" value="P:endosome to lysosome transport"/>
    <property type="evidence" value="ECO:0000318"/>
    <property type="project" value="GO_Central"/>
</dbReference>
<dbReference type="GO" id="GO:0045744">
    <property type="term" value="P:negative regulation of G protein-coupled receptor signaling pathway"/>
    <property type="evidence" value="ECO:0000318"/>
    <property type="project" value="GO_Central"/>
</dbReference>
<dbReference type="GO" id="GO:0045879">
    <property type="term" value="P:negative regulation of smoothened signaling pathway"/>
    <property type="evidence" value="ECO:0000250"/>
    <property type="project" value="UniProtKB"/>
</dbReference>
<dbReference type="GO" id="GO:0016567">
    <property type="term" value="P:protein ubiquitination"/>
    <property type="evidence" value="ECO:0000318"/>
    <property type="project" value="GO_Central"/>
</dbReference>
<dbReference type="FunFam" id="3.30.40.10:FF:000013">
    <property type="entry name" value="E3 ubiquitin-protein ligase MGRN1 isoform 1"/>
    <property type="match status" value="1"/>
</dbReference>
<dbReference type="Gene3D" id="3.30.40.10">
    <property type="entry name" value="Zinc/RING finger domain, C3HC4 (zinc finger)"/>
    <property type="match status" value="1"/>
</dbReference>
<dbReference type="InterPro" id="IPR045194">
    <property type="entry name" value="MGRN1/RNF157-like"/>
</dbReference>
<dbReference type="InterPro" id="IPR001841">
    <property type="entry name" value="Znf_RING"/>
</dbReference>
<dbReference type="InterPro" id="IPR013083">
    <property type="entry name" value="Znf_RING/FYVE/PHD"/>
</dbReference>
<dbReference type="PANTHER" id="PTHR22996:SF2">
    <property type="entry name" value="E3 UBIQUITIN-PROTEIN LIGASE MGRN1"/>
    <property type="match status" value="1"/>
</dbReference>
<dbReference type="PANTHER" id="PTHR22996">
    <property type="entry name" value="MAHOGUNIN"/>
    <property type="match status" value="1"/>
</dbReference>
<dbReference type="Pfam" id="PF13920">
    <property type="entry name" value="zf-C3HC4_3"/>
    <property type="match status" value="1"/>
</dbReference>
<dbReference type="SMART" id="SM00184">
    <property type="entry name" value="RING"/>
    <property type="match status" value="1"/>
</dbReference>
<dbReference type="SUPFAM" id="SSF57850">
    <property type="entry name" value="RING/U-box"/>
    <property type="match status" value="1"/>
</dbReference>
<dbReference type="PROSITE" id="PS50089">
    <property type="entry name" value="ZF_RING_2"/>
    <property type="match status" value="1"/>
</dbReference>
<reference key="1">
    <citation type="submission" date="2003-03" db="EMBL/GenBank/DDBJ databases">
        <authorList>
            <consortium name="NIH - Zebrafish Gene Collection (ZGC) project"/>
        </authorList>
    </citation>
    <scope>NUCLEOTIDE SEQUENCE [LARGE SCALE MRNA]</scope>
    <source>
        <strain>AB</strain>
    </source>
</reference>
<sequence length="529" mass="58146">MGSILSRRIAGVEDIDIQANSAYRYPPKSGNYFTSHFFMGGEKFDTPHPEGYLFGENMDLNFLGNRPVQFPYVTPAAHEPVKTLRSLVNIRKDSLRLVRYKDDSDSTPEDTGDPRVLYSVEFCFDTDARVAITLYCQAFEEFANGMAIYSAKSPSMVSETVHYKRGINQQFSLPSFKIDFTKWKPEELNFDLDKGVFPLVVQAIVDDGDDVTGHAHVLLAAFERHVDGSFSVKPLKQKQIVDRVSYLLQEIYGIENRNNQETKSTEDENSDNSSECVVCLSDLRDTLILPCRHLCLCNACADTLRYQANNCPICRLPFRALLQIRAVRKKTAATLSPVSFSPVLSQSSDHTEHSNADNIPPGYEPISLLEALNGVQPVSPSIPSAPLYEEIQFSGEMGDPLNLTGRQQNGDPGALKGKGSKSPDGSVRSPSSPIQEEEDEERLSELSDAQPQSVLPCSLSPSEDTVEGVTAKPGLPNSGSESRSLGVSVSEILQDCHSERSSLSQSESDPSADLALPASESWSTAVEEC</sequence>
<proteinExistence type="evidence at transcript level"/>
<feature type="chain" id="PRO_0000246690" description="Probable E3 ubiquitin-protein ligase MGRN1">
    <location>
        <begin position="1"/>
        <end position="529"/>
    </location>
</feature>
<feature type="zinc finger region" description="RING-type" evidence="3">
    <location>
        <begin position="275"/>
        <end position="314"/>
    </location>
</feature>
<feature type="region of interest" description="Disordered" evidence="4">
    <location>
        <begin position="341"/>
        <end position="362"/>
    </location>
</feature>
<feature type="region of interest" description="Disordered" evidence="4">
    <location>
        <begin position="396"/>
        <end position="529"/>
    </location>
</feature>
<feature type="compositionally biased region" description="Polar residues" evidence="4">
    <location>
        <begin position="449"/>
        <end position="463"/>
    </location>
</feature>
<feature type="compositionally biased region" description="Polar residues" evidence="4">
    <location>
        <begin position="477"/>
        <end position="487"/>
    </location>
</feature>
<feature type="compositionally biased region" description="Low complexity" evidence="4">
    <location>
        <begin position="501"/>
        <end position="511"/>
    </location>
</feature>
<feature type="compositionally biased region" description="Polar residues" evidence="4">
    <location>
        <begin position="520"/>
        <end position="529"/>
    </location>
</feature>
<accession>Q7ZUL9</accession>
<organism>
    <name type="scientific">Danio rerio</name>
    <name type="common">Zebrafish</name>
    <name type="synonym">Brachydanio rerio</name>
    <dbReference type="NCBI Taxonomy" id="7955"/>
    <lineage>
        <taxon>Eukaryota</taxon>
        <taxon>Metazoa</taxon>
        <taxon>Chordata</taxon>
        <taxon>Craniata</taxon>
        <taxon>Vertebrata</taxon>
        <taxon>Euteleostomi</taxon>
        <taxon>Actinopterygii</taxon>
        <taxon>Neopterygii</taxon>
        <taxon>Teleostei</taxon>
        <taxon>Ostariophysi</taxon>
        <taxon>Cypriniformes</taxon>
        <taxon>Danionidae</taxon>
        <taxon>Danioninae</taxon>
        <taxon>Danio</taxon>
    </lineage>
</organism>
<protein>
    <recommendedName>
        <fullName>Probable E3 ubiquitin-protein ligase MGRN1</fullName>
        <ecNumber>2.3.2.27</ecNumber>
    </recommendedName>
    <alternativeName>
        <fullName>Mahogunin RING finger protein 1</fullName>
    </alternativeName>
    <alternativeName>
        <fullName evidence="5">RING-type E3 ubiquitin transferase MGRN1</fullName>
    </alternativeName>
</protein>
<evidence type="ECO:0000250" key="1"/>
<evidence type="ECO:0000250" key="2">
    <source>
        <dbReference type="UniProtKB" id="Q9D074"/>
    </source>
</evidence>
<evidence type="ECO:0000255" key="3">
    <source>
        <dbReference type="PROSITE-ProRule" id="PRU00175"/>
    </source>
</evidence>
<evidence type="ECO:0000256" key="4">
    <source>
        <dbReference type="SAM" id="MobiDB-lite"/>
    </source>
</evidence>
<evidence type="ECO:0000305" key="5"/>